<proteinExistence type="evidence at protein level"/>
<keyword id="KW-0025">Alternative splicing</keyword>
<keyword id="KW-1003">Cell membrane</keyword>
<keyword id="KW-0165">Cleavage on pair of basic residues</keyword>
<keyword id="KW-0217">Developmental protein</keyword>
<keyword id="KW-1015">Disulfide bond</keyword>
<keyword id="KW-0325">Glycoprotein</keyword>
<keyword id="KW-0472">Membrane</keyword>
<keyword id="KW-1185">Reference proteome</keyword>
<keyword id="KW-0964">Secreted</keyword>
<keyword id="KW-0732">Signal</keyword>
<feature type="signal peptide" evidence="1">
    <location>
        <begin position="1"/>
        <end position="21"/>
    </location>
</feature>
<feature type="chain" id="PRO_5004203492" description="Protein let-653" evidence="9">
    <location>
        <begin position="22"/>
        <end position="812"/>
    </location>
</feature>
<feature type="domain" description="Apple 1" evidence="2">
    <location>
        <begin position="26"/>
        <end position="116"/>
    </location>
</feature>
<feature type="domain" description="Apple 2" evidence="2">
    <location>
        <begin position="123"/>
        <end position="209"/>
    </location>
</feature>
<feature type="domain" description="ZP" evidence="3">
    <location>
        <begin position="221"/>
        <end position="725"/>
    </location>
</feature>
<feature type="region of interest" description="Disordered" evidence="5">
    <location>
        <begin position="375"/>
        <end position="461"/>
    </location>
</feature>
<feature type="region of interest" description="Disordered" evidence="5">
    <location>
        <begin position="494"/>
        <end position="584"/>
    </location>
</feature>
<feature type="compositionally biased region" description="Low complexity" evidence="5">
    <location>
        <begin position="375"/>
        <end position="449"/>
    </location>
</feature>
<feature type="compositionally biased region" description="Low complexity" evidence="5">
    <location>
        <begin position="496"/>
        <end position="584"/>
    </location>
</feature>
<feature type="glycosylation site" description="N-linked (GlcNAc...) asparagine" evidence="4">
    <location>
        <position position="172"/>
    </location>
</feature>
<feature type="glycosylation site" description="N-linked (GlcNAc...) asparagine" evidence="4">
    <location>
        <position position="211"/>
    </location>
</feature>
<feature type="glycosylation site" description="N-linked (GlcNAc...) asparagine" evidence="4">
    <location>
        <position position="272"/>
    </location>
</feature>
<feature type="glycosylation site" description="N-linked (GlcNAc...) asparagine" evidence="4">
    <location>
        <position position="771"/>
    </location>
</feature>
<feature type="disulfide bond" evidence="2">
    <location>
        <begin position="26"/>
        <end position="116"/>
    </location>
</feature>
<feature type="disulfide bond" evidence="2">
    <location>
        <begin position="53"/>
        <end position="88"/>
    </location>
</feature>
<feature type="disulfide bond" evidence="2">
    <location>
        <begin position="57"/>
        <end position="72"/>
    </location>
</feature>
<feature type="disulfide bond" evidence="2">
    <location>
        <begin position="123"/>
        <end position="209"/>
    </location>
</feature>
<feature type="disulfide bond" evidence="2">
    <location>
        <begin position="154"/>
        <end position="178"/>
    </location>
</feature>
<feature type="disulfide bond" evidence="2">
    <location>
        <begin position="158"/>
        <end position="166"/>
    </location>
</feature>
<feature type="splice variant" id="VSP_058741" description="In isoform b." evidence="9">
    <original>RNKAMEASAHALFELLSKTGDDEALQNTFPLPLTTTTEVIRQVTTTTKKPSTTTSTKKLTTTTTTTPKPSQKPTTTTTKSPVVITTTTKTSPKPTTSPSTTTSTTTSTTIPPSTTTRKPANPRRSTIMSATSKVAIIVGKDSSFARARLFTTKHPSTQKI</original>
    <variation>S</variation>
    <location>
        <begin position="334"/>
        <end position="493"/>
    </location>
</feature>
<feature type="splice variant" id="VSP_058742" description="In isoform c." evidence="9">
    <original>RQVTTTTKKPSTTTSTKKLTTTTTTTPKPSQKPTTTTTKSPVVITTTTKTSPKPTTSPSTTTSTTTSTTIPPSTTTRKPANPRRSTIMSATSKVAIIVGKDSSFARARLFTTKHPSTQKI</original>
    <variation>S</variation>
    <location>
        <begin position="374"/>
        <end position="493"/>
    </location>
</feature>
<feature type="mutagenesis site" description="In cs178; Lethal at the larval stage of development due to discontinuities in the excretory duct tube lumen that prevent fluid excretion." evidence="7">
    <location>
        <begin position="54"/>
        <end position="812"/>
    </location>
</feature>
<feature type="mutagenesis site" description="Abolishes cleavage of the C-terminal domain. Does not impair localization and localizes to the apical membrane of the vulva and the excretory duct lumen in embryos, as wild-type. Partially rescues the excretory duct defects in the let-653 cs178 mutant." evidence="7">
    <original>RYRR</original>
    <variation>AYAA</variation>
    <location>
        <begin position="731"/>
        <end position="734"/>
    </location>
</feature>
<feature type="mutagenesis site" description="Not secreted. Does not rescue excretory duct defects in the let-653 cs178 mutant." evidence="7">
    <location>
        <begin position="772"/>
        <end position="812"/>
    </location>
</feature>
<protein>
    <recommendedName>
        <fullName evidence="9">Protein let-653</fullName>
    </recommendedName>
    <alternativeName>
        <fullName evidence="12">Lethal protein 653</fullName>
    </alternativeName>
</protein>
<reference evidence="10" key="1">
    <citation type="journal article" date="1995" name="Mol. Gen. Genet.">
        <title>Characterization of the let-653 gene in Caenorhabditis elegans.</title>
        <authorList>
            <person name="Jones S.J.M."/>
            <person name="Baillie D.L."/>
        </authorList>
    </citation>
    <scope>NUCLEOTIDE SEQUENCE [GENOMIC DNA] (ISOFORM C)</scope>
    <scope>FUNCTION</scope>
    <source>
        <strain evidence="10">Bristol N2</strain>
    </source>
</reference>
<reference evidence="11" key="2">
    <citation type="journal article" date="1998" name="Science">
        <title>Genome sequence of the nematode C. elegans: a platform for investigating biology.</title>
        <authorList>
            <consortium name="The C. elegans sequencing consortium"/>
        </authorList>
    </citation>
    <scope>NUCLEOTIDE SEQUENCE [LARGE SCALE GENOMIC DNA]</scope>
    <source>
        <strain evidence="11">Bristol N2</strain>
    </source>
</reference>
<reference evidence="9" key="3">
    <citation type="journal article" date="2016" name="PLoS Genet.">
        <title>Integrity of narrow epithelial tubes in the C. elegans excretory system requires a transient luminal matrix.</title>
        <authorList>
            <person name="Gill H.K."/>
            <person name="Cohen J.D."/>
            <person name="Ayala-Figueroa J."/>
            <person name="Forman-Rubinsky R."/>
            <person name="Poggioli C."/>
            <person name="Bickard K."/>
            <person name="Parry J.M."/>
            <person name="Pu P."/>
            <person name="Hall D.H."/>
            <person name="Sundaram M.V."/>
        </authorList>
    </citation>
    <scope>FUNCTION</scope>
    <scope>SUBCELLULAR LOCATION</scope>
    <scope>TISSUE SPECIFICITY</scope>
    <scope>DEVELOPMENTAL STAGE</scope>
    <scope>DOMAIN</scope>
    <scope>PROTEOLYTIC CLEAVAGE</scope>
    <scope>DISRUPTION PHENOTYPE</scope>
</reference>
<reference key="4">
    <citation type="journal article" date="2020" name="PLoS Genet.">
        <title>A C. elegans Zona Pellucida domain protein functions via its ZPc domain.</title>
        <authorList>
            <person name="Cohen J.D."/>
            <person name="Bermudez J.G."/>
            <person name="Good M.C."/>
            <person name="Sundaram M.V."/>
        </authorList>
    </citation>
    <scope>FUNCTION</scope>
    <scope>SUBCELLULAR LOCATION</scope>
    <scope>TISSUE SPECIFICITY</scope>
    <scope>DOMAIN</scope>
    <scope>PROTEOLYTIC CLEAVAGE</scope>
    <scope>MUTAGENESIS OF 54-GLN--ILE-812; 731-ARG--ARG-734 AND 772-PHE--ILE-812</scope>
</reference>
<name>LE653_CAEEL</name>
<evidence type="ECO:0000255" key="1"/>
<evidence type="ECO:0000255" key="2">
    <source>
        <dbReference type="PROSITE-ProRule" id="PRU00315"/>
    </source>
</evidence>
<evidence type="ECO:0000255" key="3">
    <source>
        <dbReference type="PROSITE-ProRule" id="PRU00375"/>
    </source>
</evidence>
<evidence type="ECO:0000255" key="4">
    <source>
        <dbReference type="PROSITE-ProRule" id="PRU00498"/>
    </source>
</evidence>
<evidence type="ECO:0000256" key="5">
    <source>
        <dbReference type="SAM" id="MobiDB-lite"/>
    </source>
</evidence>
<evidence type="ECO:0000269" key="6">
    <source>
    </source>
</evidence>
<evidence type="ECO:0000269" key="7">
    <source>
    </source>
</evidence>
<evidence type="ECO:0000269" key="8">
    <source>
    </source>
</evidence>
<evidence type="ECO:0000305" key="9"/>
<evidence type="ECO:0000312" key="10">
    <source>
        <dbReference type="EMBL" id="CAA62505.1"/>
    </source>
</evidence>
<evidence type="ECO:0000312" key="11">
    <source>
        <dbReference type="Proteomes" id="UP000001940"/>
    </source>
</evidence>
<evidence type="ECO:0000312" key="12">
    <source>
        <dbReference type="WormBase" id="C29E6.1a"/>
    </source>
</evidence>
<evidence type="ECO:0000312" key="13">
    <source>
        <dbReference type="WormBase" id="C29E6.1b"/>
    </source>
</evidence>
<evidence type="ECO:0000312" key="14">
    <source>
        <dbReference type="WormBase" id="C29E6.1c"/>
    </source>
</evidence>
<dbReference type="EMBL" id="X91045">
    <property type="protein sequence ID" value="CAA62505.1"/>
    <property type="molecule type" value="Genomic_DNA"/>
</dbReference>
<dbReference type="EMBL" id="BX284604">
    <property type="protein sequence ID" value="CAA96602.2"/>
    <property type="molecule type" value="Genomic_DNA"/>
</dbReference>
<dbReference type="EMBL" id="BX284604">
    <property type="protein sequence ID" value="CAH60755.1"/>
    <property type="molecule type" value="Genomic_DNA"/>
</dbReference>
<dbReference type="EMBL" id="BX284604">
    <property type="protein sequence ID" value="CCD31038.1"/>
    <property type="molecule type" value="Genomic_DNA"/>
</dbReference>
<dbReference type="PIR" id="T19551">
    <property type="entry name" value="T19551"/>
</dbReference>
<dbReference type="RefSeq" id="NP_001021336.2">
    <molecule id="Q27394-1"/>
    <property type="nucleotide sequence ID" value="NM_001026165.7"/>
</dbReference>
<dbReference type="RefSeq" id="NP_001021337.1">
    <molecule id="Q27394-2"/>
    <property type="nucleotide sequence ID" value="NM_001026166.5"/>
</dbReference>
<dbReference type="RefSeq" id="NP_001255594.1">
    <molecule id="Q27394-3"/>
    <property type="nucleotide sequence ID" value="NM_001268665.4"/>
</dbReference>
<dbReference type="FunCoup" id="Q27394">
    <property type="interactions" value="11"/>
</dbReference>
<dbReference type="STRING" id="6239.C29E6.1a.2"/>
<dbReference type="GlyCosmos" id="Q27394">
    <property type="glycosylation" value="4 sites, No reported glycans"/>
</dbReference>
<dbReference type="PaxDb" id="6239-C29E6.1a.2"/>
<dbReference type="EnsemblMetazoa" id="C29E6.1a.1">
    <molecule id="Q27394-1"/>
    <property type="protein sequence ID" value="C29E6.1a.1"/>
    <property type="gene ID" value="WBGene00002827"/>
</dbReference>
<dbReference type="EnsemblMetazoa" id="C29E6.1b.1">
    <molecule id="Q27394-2"/>
    <property type="protein sequence ID" value="C29E6.1b.1"/>
    <property type="gene ID" value="WBGene00002827"/>
</dbReference>
<dbReference type="EnsemblMetazoa" id="C29E6.1c.1">
    <molecule id="Q27394-3"/>
    <property type="protein sequence ID" value="C29E6.1c.1"/>
    <property type="gene ID" value="WBGene00002827"/>
</dbReference>
<dbReference type="GeneID" id="178120"/>
<dbReference type="KEGG" id="cel:CELE_C29E6.1"/>
<dbReference type="UCSC" id="C29E6.1b.1">
    <property type="organism name" value="c. elegans"/>
</dbReference>
<dbReference type="AGR" id="WB:WBGene00002827"/>
<dbReference type="CTD" id="178120"/>
<dbReference type="WormBase" id="C29E6.1a">
    <molecule id="Q27394-1"/>
    <property type="protein sequence ID" value="CE40548"/>
    <property type="gene ID" value="WBGene00002827"/>
    <property type="gene designation" value="let-653"/>
</dbReference>
<dbReference type="WormBase" id="C29E6.1b">
    <molecule id="Q27394-2"/>
    <property type="protein sequence ID" value="CE37323"/>
    <property type="gene ID" value="WBGene00002827"/>
    <property type="gene designation" value="let-653"/>
</dbReference>
<dbReference type="WormBase" id="C29E6.1c">
    <molecule id="Q27394-3"/>
    <property type="protein sequence ID" value="CE05332"/>
    <property type="gene ID" value="WBGene00002827"/>
    <property type="gene designation" value="let-653"/>
</dbReference>
<dbReference type="eggNOG" id="ENOG502SMP8">
    <property type="taxonomic scope" value="Eukaryota"/>
</dbReference>
<dbReference type="GeneTree" id="ENSGT00970000196473"/>
<dbReference type="InParanoid" id="Q27394"/>
<dbReference type="OMA" id="CHMSKDS"/>
<dbReference type="OrthoDB" id="5775605at2759"/>
<dbReference type="PRO" id="PR:Q27394"/>
<dbReference type="Proteomes" id="UP000001940">
    <property type="component" value="Chromosome IV"/>
</dbReference>
<dbReference type="Bgee" id="WBGene00002827">
    <property type="expression patterns" value="Expressed in embryo and 4 other cell types or tissues"/>
</dbReference>
<dbReference type="GO" id="GO:0098592">
    <property type="term" value="C:cytoplasmic side of apical plasma membrane"/>
    <property type="evidence" value="ECO:0000314"/>
    <property type="project" value="UniProtKB"/>
</dbReference>
<dbReference type="GO" id="GO:0098591">
    <property type="term" value="C:external side of apical plasma membrane"/>
    <property type="evidence" value="ECO:0000314"/>
    <property type="project" value="UniProtKB"/>
</dbReference>
<dbReference type="GO" id="GO:0005615">
    <property type="term" value="C:extracellular space"/>
    <property type="evidence" value="ECO:0000314"/>
    <property type="project" value="UniProtKB"/>
</dbReference>
<dbReference type="GO" id="GO:0099512">
    <property type="term" value="C:supramolecular fiber"/>
    <property type="evidence" value="ECO:0000314"/>
    <property type="project" value="UniProtKB"/>
</dbReference>
<dbReference type="GO" id="GO:0042302">
    <property type="term" value="F:structural constituent of cuticle"/>
    <property type="evidence" value="ECO:0000315"/>
    <property type="project" value="UniProtKB"/>
</dbReference>
<dbReference type="GO" id="GO:0009653">
    <property type="term" value="P:anatomical structure morphogenesis"/>
    <property type="evidence" value="ECO:0000315"/>
    <property type="project" value="UniProtKB"/>
</dbReference>
<dbReference type="GO" id="GO:0035017">
    <property type="term" value="P:cuticle pattern formation"/>
    <property type="evidence" value="ECO:0000315"/>
    <property type="project" value="UniProtKB"/>
</dbReference>
<dbReference type="GO" id="GO:0048613">
    <property type="term" value="P:embryonic ectodermal digestive tract morphogenesis"/>
    <property type="evidence" value="ECO:0000315"/>
    <property type="project" value="UniProtKB"/>
</dbReference>
<dbReference type="GO" id="GO:0002064">
    <property type="term" value="P:epithelial cell development"/>
    <property type="evidence" value="ECO:0000315"/>
    <property type="project" value="WormBase"/>
</dbReference>
<dbReference type="GO" id="GO:1903133">
    <property type="term" value="P:negative regulation of tube lumen cavitation"/>
    <property type="evidence" value="ECO:0000315"/>
    <property type="project" value="UniProtKB"/>
</dbReference>
<dbReference type="GO" id="GO:1905278">
    <property type="term" value="P:positive regulation of epithelial tube formation"/>
    <property type="evidence" value="ECO:0000315"/>
    <property type="project" value="UniProtKB"/>
</dbReference>
<dbReference type="GO" id="GO:0040018">
    <property type="term" value="P:positive regulation of multicellular organism growth"/>
    <property type="evidence" value="ECO:0000315"/>
    <property type="project" value="UniProtKB"/>
</dbReference>
<dbReference type="GO" id="GO:0061063">
    <property type="term" value="P:positive regulation of nematode larval development"/>
    <property type="evidence" value="ECO:0000315"/>
    <property type="project" value="UniProtKB"/>
</dbReference>
<dbReference type="GO" id="GO:0040026">
    <property type="term" value="P:positive regulation of vulval development"/>
    <property type="evidence" value="ECO:0000315"/>
    <property type="project" value="UniProtKB"/>
</dbReference>
<dbReference type="GO" id="GO:0035150">
    <property type="term" value="P:regulation of tube size"/>
    <property type="evidence" value="ECO:0000315"/>
    <property type="project" value="WormBase"/>
</dbReference>
<dbReference type="CDD" id="cd01099">
    <property type="entry name" value="PAN_AP_HGF"/>
    <property type="match status" value="1"/>
</dbReference>
<dbReference type="Gene3D" id="3.50.4.10">
    <property type="entry name" value="Hepatocyte Growth Factor"/>
    <property type="match status" value="1"/>
</dbReference>
<dbReference type="InterPro" id="IPR052774">
    <property type="entry name" value="Celegans_DevNeuronal_Protein"/>
</dbReference>
<dbReference type="InterPro" id="IPR003609">
    <property type="entry name" value="Pan_app"/>
</dbReference>
<dbReference type="InterPro" id="IPR001507">
    <property type="entry name" value="ZP_dom"/>
</dbReference>
<dbReference type="PANTHER" id="PTHR47327">
    <property type="entry name" value="FI18240P1-RELATED"/>
    <property type="match status" value="1"/>
</dbReference>
<dbReference type="PANTHER" id="PTHR47327:SF6">
    <property type="entry name" value="PROTEIN LET-653"/>
    <property type="match status" value="1"/>
</dbReference>
<dbReference type="Pfam" id="PF00024">
    <property type="entry name" value="PAN_1"/>
    <property type="match status" value="1"/>
</dbReference>
<dbReference type="SMART" id="SM00473">
    <property type="entry name" value="PAN_AP"/>
    <property type="match status" value="2"/>
</dbReference>
<dbReference type="SMART" id="SM00241">
    <property type="entry name" value="ZP"/>
    <property type="match status" value="1"/>
</dbReference>
<dbReference type="SUPFAM" id="SSF57414">
    <property type="entry name" value="Hairpin loop containing domain-like"/>
    <property type="match status" value="1"/>
</dbReference>
<dbReference type="PROSITE" id="PS50948">
    <property type="entry name" value="PAN"/>
    <property type="match status" value="2"/>
</dbReference>
<dbReference type="PROSITE" id="PS51034">
    <property type="entry name" value="ZP_2"/>
    <property type="match status" value="1"/>
</dbReference>
<comment type="function">
    <text evidence="6 7 8">Required for epithelial tube development and shaping (PubMed:27482894, PubMed:33141826). Involved in the morphogenesis and function of the three unicellular tubes of the excretory system, the canal cell, the duct cell and the pore cell (PubMed:27482894, PubMed:33141826, PubMed:7476875). Also plays a role in cuticle development, alae formation and shaping of the vulval lumen (PubMed:27482894). Required for larval development (PubMed:27482894, PubMed:33141826, PubMed:7476875).</text>
</comment>
<comment type="subcellular location">
    <molecule>Isoform b</molecule>
    <subcellularLocation>
        <location evidence="6 7">Apical cell membrane</location>
        <topology evidence="6 7">Peripheral membrane protein</topology>
        <orientation evidence="6 7">Lumenal side</orientation>
    </subcellularLocation>
    <subcellularLocation>
        <location evidence="6">Secreted</location>
        <location evidence="6">Extracellular space</location>
    </subcellularLocation>
    <subcellularLocation>
        <location evidence="6 7">Secreted</location>
    </subcellularLocation>
    <text evidence="6">Localizes to fibrils in the vulval luminal space.</text>
</comment>
<comment type="alternative products">
    <event type="alternative splicing"/>
    <isoform>
        <id>Q27394-1</id>
        <name evidence="12">a</name>
        <sequence type="displayed"/>
    </isoform>
    <isoform>
        <id>Q27394-2</id>
        <name evidence="13">b</name>
        <sequence type="described" ref="VSP_058741"/>
    </isoform>
    <isoform>
        <id>Q27394-3</id>
        <name evidence="14">c</name>
        <sequence type="described" ref="VSP_058742"/>
    </isoform>
</comment>
<comment type="tissue specificity">
    <molecule>Isoform b</molecule>
    <text evidence="6 7">Expressed in external cuticle-producing epithelial cells including the epidermis, vulva, rectum, excretory duct and excretory pore.</text>
</comment>
<comment type="developmental stage">
    <molecule>Isoform b</molecule>
    <text evidence="6">Secreted in the region between the embryo and inner layer of the eggshell. Expressed in excretory canal cells of embryos and at the 1.5-fold stage of embryonic development accumulates in the lumen of the excretory duct and pore. Expression ceases in the lumen of the excretory duct and pore prior to cuticle secretion. Thereafter expressed transiently in the lumen of the excretory duct and pore in the latter phase of each subsequent larval developmental stage. During the molt phase of larval development, accumulates in the space in between the new and old cuticles. During the L4 stage of larval development, accumulates in the vulval lumen.</text>
</comment>
<comment type="domain">
    <molecule>Isoform b</molecule>
    <text evidence="6 7">The ZP domain is required for localization at the apical cell membrane, secretion and excretory tube and vulval lumen expansion.</text>
</comment>
<comment type="PTM">
    <molecule>Isoform b</molecule>
    <text evidence="6 7">Cleaved at the C-terminal domain.</text>
</comment>
<comment type="disruption phenotype">
    <text evidence="6">Lethal at the larval stage of development. Defects in the development of the excretory system during embryogenesis and the early stages of larval development. Dilated lumens of both the excretory canal cell and excretory duct which become apparent between the early and mid 3-fold stages of embryogenesis and increases in severity as development progresses. Lumen dialation may be as a result of fluid accumulation due to blockage of the lumen. At around the time of hatching, the autocellular junction, which usually seals the excretory pore tube, is absent. Detached excretory duct and pore cells, which usually connects the excretory canal cell to the outside environment for excretion. Irregular morphology of the epidermis and vulva in larvae at the L1 stage of larval development.</text>
</comment>
<sequence length="812" mass="89480">MRHPLISLLLLIAFYSTSSEAFVPKCNSFYVRWPRVRLNFKAVAEARLSLKGCQSACSLGEDPVSPGKQLECAAVNHQASPDGFSHLCAVFQPHQLQNVDGYVEADDRFTFYWKYCLPSTRKCSGEYAFTYLSDRYMDQKSVIKWTTKANLEECLSDCLDEKSFECRSISFNRTDGGCHMSKDSQISRPEAIRLNNNPNYRIDYYENNCYNLSESFTFKHECRDNGISVSVKSRLPYTGAIYGLYDFFTCRTEPKEATEFDHFFPYQTVSKNCSDSIKYKGNEMVLEVVLSTDGIEPLYFITPEDLTYQAKCPISGVKAKDPANTKSSAHLDNRNKAMEASAHALFELLSKTGDDEALQNTFPLPLTTTTEVIRQVTTTTKKPSTTTSTKKLTTTTTTTPKPSQKPTTTTTKSPVVITTTTKTSPKPTTSPSTTTSTTTSTTIPPSTTTRKPANPRRSTIMSATSKVAIIVGKDSSFARARLFTTKHPSTQKIDVPTTTVQTSTTVPTTPSKTTATTTTTPKPTTTETATTSSSTTTVTTQKPTTVTSTTTLPSTTASTTTKTTTSTPTSPQTTTTHVGAPASSVASVAHDGSTLAGKPKVPVIFDIFHNGQPVEAVVVGTKISLSFRPHYPIPPEYVDVRGCQVEPIDPKYEWEHEPLFIIRDGCPADGVGLVCPPTHSEFGAKVSVEAFRYQTTGQVQYSCLVRICPFAPCPKNTCDDVEGCDSSYMHRYRRELSLEDIKKALEANPELASQFGISPSAFARNPSKSKNFTSVVEEQQRIALGGDYLVRRRLIVVNSEDQLRYYVRTGNI</sequence>
<gene>
    <name evidence="12" type="primary">let-653</name>
    <name evidence="12" type="ORF">C29E6.1</name>
</gene>
<organism evidence="11">
    <name type="scientific">Caenorhabditis elegans</name>
    <dbReference type="NCBI Taxonomy" id="6239"/>
    <lineage>
        <taxon>Eukaryota</taxon>
        <taxon>Metazoa</taxon>
        <taxon>Ecdysozoa</taxon>
        <taxon>Nematoda</taxon>
        <taxon>Chromadorea</taxon>
        <taxon>Rhabditida</taxon>
        <taxon>Rhabditina</taxon>
        <taxon>Rhabditomorpha</taxon>
        <taxon>Rhabditoidea</taxon>
        <taxon>Rhabditidae</taxon>
        <taxon>Peloderinae</taxon>
        <taxon>Caenorhabditis</taxon>
    </lineage>
</organism>
<accession>Q27394</accession>
<accession>G5ECH8</accession>
<accession>Q5WRN8</accession>